<protein>
    <recommendedName>
        <fullName>FERM domain-containing protein 1</fullName>
    </recommendedName>
</protein>
<gene>
    <name type="primary">FRMD1</name>
</gene>
<accession>Q8N878</accession>
<accession>B2RNV8</accession>
<accession>B3KUM6</accession>
<accession>Q5SZU7</accession>
<accession>Q9UFB0</accession>
<reference key="1">
    <citation type="journal article" date="2004" name="Nat. Genet.">
        <title>Complete sequencing and characterization of 21,243 full-length human cDNAs.</title>
        <authorList>
            <person name="Ota T."/>
            <person name="Suzuki Y."/>
            <person name="Nishikawa T."/>
            <person name="Otsuki T."/>
            <person name="Sugiyama T."/>
            <person name="Irie R."/>
            <person name="Wakamatsu A."/>
            <person name="Hayashi K."/>
            <person name="Sato H."/>
            <person name="Nagai K."/>
            <person name="Kimura K."/>
            <person name="Makita H."/>
            <person name="Sekine M."/>
            <person name="Obayashi M."/>
            <person name="Nishi T."/>
            <person name="Shibahara T."/>
            <person name="Tanaka T."/>
            <person name="Ishii S."/>
            <person name="Yamamoto J."/>
            <person name="Saito K."/>
            <person name="Kawai Y."/>
            <person name="Isono Y."/>
            <person name="Nakamura Y."/>
            <person name="Nagahari K."/>
            <person name="Murakami K."/>
            <person name="Yasuda T."/>
            <person name="Iwayanagi T."/>
            <person name="Wagatsuma M."/>
            <person name="Shiratori A."/>
            <person name="Sudo H."/>
            <person name="Hosoiri T."/>
            <person name="Kaku Y."/>
            <person name="Kodaira H."/>
            <person name="Kondo H."/>
            <person name="Sugawara M."/>
            <person name="Takahashi M."/>
            <person name="Kanda K."/>
            <person name="Yokoi T."/>
            <person name="Furuya T."/>
            <person name="Kikkawa E."/>
            <person name="Omura Y."/>
            <person name="Abe K."/>
            <person name="Kamihara K."/>
            <person name="Katsuta N."/>
            <person name="Sato K."/>
            <person name="Tanikawa M."/>
            <person name="Yamazaki M."/>
            <person name="Ninomiya K."/>
            <person name="Ishibashi T."/>
            <person name="Yamashita H."/>
            <person name="Murakawa K."/>
            <person name="Fujimori K."/>
            <person name="Tanai H."/>
            <person name="Kimata M."/>
            <person name="Watanabe M."/>
            <person name="Hiraoka S."/>
            <person name="Chiba Y."/>
            <person name="Ishida S."/>
            <person name="Ono Y."/>
            <person name="Takiguchi S."/>
            <person name="Watanabe S."/>
            <person name="Yosida M."/>
            <person name="Hotuta T."/>
            <person name="Kusano J."/>
            <person name="Kanehori K."/>
            <person name="Takahashi-Fujii A."/>
            <person name="Hara H."/>
            <person name="Tanase T.-O."/>
            <person name="Nomura Y."/>
            <person name="Togiya S."/>
            <person name="Komai F."/>
            <person name="Hara R."/>
            <person name="Takeuchi K."/>
            <person name="Arita M."/>
            <person name="Imose N."/>
            <person name="Musashino K."/>
            <person name="Yuuki H."/>
            <person name="Oshima A."/>
            <person name="Sasaki N."/>
            <person name="Aotsuka S."/>
            <person name="Yoshikawa Y."/>
            <person name="Matsunawa H."/>
            <person name="Ichihara T."/>
            <person name="Shiohata N."/>
            <person name="Sano S."/>
            <person name="Moriya S."/>
            <person name="Momiyama H."/>
            <person name="Satoh N."/>
            <person name="Takami S."/>
            <person name="Terashima Y."/>
            <person name="Suzuki O."/>
            <person name="Nakagawa S."/>
            <person name="Senoh A."/>
            <person name="Mizoguchi H."/>
            <person name="Goto Y."/>
            <person name="Shimizu F."/>
            <person name="Wakebe H."/>
            <person name="Hishigaki H."/>
            <person name="Watanabe T."/>
            <person name="Sugiyama A."/>
            <person name="Takemoto M."/>
            <person name="Kawakami B."/>
            <person name="Yamazaki M."/>
            <person name="Watanabe K."/>
            <person name="Kumagai A."/>
            <person name="Itakura S."/>
            <person name="Fukuzumi Y."/>
            <person name="Fujimori Y."/>
            <person name="Komiyama M."/>
            <person name="Tashiro H."/>
            <person name="Tanigami A."/>
            <person name="Fujiwara T."/>
            <person name="Ono T."/>
            <person name="Yamada K."/>
            <person name="Fujii Y."/>
            <person name="Ozaki K."/>
            <person name="Hirao M."/>
            <person name="Ohmori Y."/>
            <person name="Kawabata A."/>
            <person name="Hikiji T."/>
            <person name="Kobatake N."/>
            <person name="Inagaki H."/>
            <person name="Ikema Y."/>
            <person name="Okamoto S."/>
            <person name="Okitani R."/>
            <person name="Kawakami T."/>
            <person name="Noguchi S."/>
            <person name="Itoh T."/>
            <person name="Shigeta K."/>
            <person name="Senba T."/>
            <person name="Matsumura K."/>
            <person name="Nakajima Y."/>
            <person name="Mizuno T."/>
            <person name="Morinaga M."/>
            <person name="Sasaki M."/>
            <person name="Togashi T."/>
            <person name="Oyama M."/>
            <person name="Hata H."/>
            <person name="Watanabe M."/>
            <person name="Komatsu T."/>
            <person name="Mizushima-Sugano J."/>
            <person name="Satoh T."/>
            <person name="Shirai Y."/>
            <person name="Takahashi Y."/>
            <person name="Nakagawa K."/>
            <person name="Okumura K."/>
            <person name="Nagase T."/>
            <person name="Nomura N."/>
            <person name="Kikuchi H."/>
            <person name="Masuho Y."/>
            <person name="Yamashita R."/>
            <person name="Nakai K."/>
            <person name="Yada T."/>
            <person name="Nakamura Y."/>
            <person name="Ohara O."/>
            <person name="Isogai T."/>
            <person name="Sugano S."/>
        </authorList>
    </citation>
    <scope>NUCLEOTIDE SEQUENCE [LARGE SCALE MRNA] (ISOFORMS 1 AND 2)</scope>
    <scope>VARIANT GLU-456</scope>
    <source>
        <tissue>Spleen</tissue>
        <tissue>Testis</tissue>
    </source>
</reference>
<reference key="2">
    <citation type="journal article" date="2007" name="BMC Genomics">
        <title>The full-ORF clone resource of the German cDNA consortium.</title>
        <authorList>
            <person name="Bechtel S."/>
            <person name="Rosenfelder H."/>
            <person name="Duda A."/>
            <person name="Schmidt C.P."/>
            <person name="Ernst U."/>
            <person name="Wellenreuther R."/>
            <person name="Mehrle A."/>
            <person name="Schuster C."/>
            <person name="Bahr A."/>
            <person name="Bloecker H."/>
            <person name="Heubner D."/>
            <person name="Hoerlein A."/>
            <person name="Michel G."/>
            <person name="Wedler H."/>
            <person name="Koehrer K."/>
            <person name="Ottenwaelder B."/>
            <person name="Poustka A."/>
            <person name="Wiemann S."/>
            <person name="Schupp I."/>
        </authorList>
    </citation>
    <scope>NUCLEOTIDE SEQUENCE [LARGE SCALE MRNA] (ISOFORM 1)</scope>
    <source>
        <tissue>Testis</tissue>
    </source>
</reference>
<reference key="3">
    <citation type="journal article" date="2003" name="Nature">
        <title>The DNA sequence and analysis of human chromosome 6.</title>
        <authorList>
            <person name="Mungall A.J."/>
            <person name="Palmer S.A."/>
            <person name="Sims S.K."/>
            <person name="Edwards C.A."/>
            <person name="Ashurst J.L."/>
            <person name="Wilming L."/>
            <person name="Jones M.C."/>
            <person name="Horton R."/>
            <person name="Hunt S.E."/>
            <person name="Scott C.E."/>
            <person name="Gilbert J.G.R."/>
            <person name="Clamp M.E."/>
            <person name="Bethel G."/>
            <person name="Milne S."/>
            <person name="Ainscough R."/>
            <person name="Almeida J.P."/>
            <person name="Ambrose K.D."/>
            <person name="Andrews T.D."/>
            <person name="Ashwell R.I.S."/>
            <person name="Babbage A.K."/>
            <person name="Bagguley C.L."/>
            <person name="Bailey J."/>
            <person name="Banerjee R."/>
            <person name="Barker D.J."/>
            <person name="Barlow K.F."/>
            <person name="Bates K."/>
            <person name="Beare D.M."/>
            <person name="Beasley H."/>
            <person name="Beasley O."/>
            <person name="Bird C.P."/>
            <person name="Blakey S.E."/>
            <person name="Bray-Allen S."/>
            <person name="Brook J."/>
            <person name="Brown A.J."/>
            <person name="Brown J.Y."/>
            <person name="Burford D.C."/>
            <person name="Burrill W."/>
            <person name="Burton J."/>
            <person name="Carder C."/>
            <person name="Carter N.P."/>
            <person name="Chapman J.C."/>
            <person name="Clark S.Y."/>
            <person name="Clark G."/>
            <person name="Clee C.M."/>
            <person name="Clegg S."/>
            <person name="Cobley V."/>
            <person name="Collier R.E."/>
            <person name="Collins J.E."/>
            <person name="Colman L.K."/>
            <person name="Corby N.R."/>
            <person name="Coville G.J."/>
            <person name="Culley K.M."/>
            <person name="Dhami P."/>
            <person name="Davies J."/>
            <person name="Dunn M."/>
            <person name="Earthrowl M.E."/>
            <person name="Ellington A.E."/>
            <person name="Evans K.A."/>
            <person name="Faulkner L."/>
            <person name="Francis M.D."/>
            <person name="Frankish A."/>
            <person name="Frankland J."/>
            <person name="French L."/>
            <person name="Garner P."/>
            <person name="Garnett J."/>
            <person name="Ghori M.J."/>
            <person name="Gilby L.M."/>
            <person name="Gillson C.J."/>
            <person name="Glithero R.J."/>
            <person name="Grafham D.V."/>
            <person name="Grant M."/>
            <person name="Gribble S."/>
            <person name="Griffiths C."/>
            <person name="Griffiths M.N.D."/>
            <person name="Hall R."/>
            <person name="Halls K.S."/>
            <person name="Hammond S."/>
            <person name="Harley J.L."/>
            <person name="Hart E.A."/>
            <person name="Heath P.D."/>
            <person name="Heathcott R."/>
            <person name="Holmes S.J."/>
            <person name="Howden P.J."/>
            <person name="Howe K.L."/>
            <person name="Howell G.R."/>
            <person name="Huckle E."/>
            <person name="Humphray S.J."/>
            <person name="Humphries M.D."/>
            <person name="Hunt A.R."/>
            <person name="Johnson C.M."/>
            <person name="Joy A.A."/>
            <person name="Kay M."/>
            <person name="Keenan S.J."/>
            <person name="Kimberley A.M."/>
            <person name="King A."/>
            <person name="Laird G.K."/>
            <person name="Langford C."/>
            <person name="Lawlor S."/>
            <person name="Leongamornlert D.A."/>
            <person name="Leversha M."/>
            <person name="Lloyd C.R."/>
            <person name="Lloyd D.M."/>
            <person name="Loveland J.E."/>
            <person name="Lovell J."/>
            <person name="Martin S."/>
            <person name="Mashreghi-Mohammadi M."/>
            <person name="Maslen G.L."/>
            <person name="Matthews L."/>
            <person name="McCann O.T."/>
            <person name="McLaren S.J."/>
            <person name="McLay K."/>
            <person name="McMurray A."/>
            <person name="Moore M.J.F."/>
            <person name="Mullikin J.C."/>
            <person name="Niblett D."/>
            <person name="Nickerson T."/>
            <person name="Novik K.L."/>
            <person name="Oliver K."/>
            <person name="Overton-Larty E.K."/>
            <person name="Parker A."/>
            <person name="Patel R."/>
            <person name="Pearce A.V."/>
            <person name="Peck A.I."/>
            <person name="Phillimore B.J.C.T."/>
            <person name="Phillips S."/>
            <person name="Plumb R.W."/>
            <person name="Porter K.M."/>
            <person name="Ramsey Y."/>
            <person name="Ranby S.A."/>
            <person name="Rice C.M."/>
            <person name="Ross M.T."/>
            <person name="Searle S.M."/>
            <person name="Sehra H.K."/>
            <person name="Sheridan E."/>
            <person name="Skuce C.D."/>
            <person name="Smith S."/>
            <person name="Smith M."/>
            <person name="Spraggon L."/>
            <person name="Squares S.L."/>
            <person name="Steward C.A."/>
            <person name="Sycamore N."/>
            <person name="Tamlyn-Hall G."/>
            <person name="Tester J."/>
            <person name="Theaker A.J."/>
            <person name="Thomas D.W."/>
            <person name="Thorpe A."/>
            <person name="Tracey A."/>
            <person name="Tromans A."/>
            <person name="Tubby B."/>
            <person name="Wall M."/>
            <person name="Wallis J.M."/>
            <person name="West A.P."/>
            <person name="White S.S."/>
            <person name="Whitehead S.L."/>
            <person name="Whittaker H."/>
            <person name="Wild A."/>
            <person name="Willey D.J."/>
            <person name="Wilmer T.E."/>
            <person name="Wood J.M."/>
            <person name="Wray P.W."/>
            <person name="Wyatt J.C."/>
            <person name="Young L."/>
            <person name="Younger R.M."/>
            <person name="Bentley D.R."/>
            <person name="Coulson A."/>
            <person name="Durbin R.M."/>
            <person name="Hubbard T."/>
            <person name="Sulston J.E."/>
            <person name="Dunham I."/>
            <person name="Rogers J."/>
            <person name="Beck S."/>
        </authorList>
    </citation>
    <scope>NUCLEOTIDE SEQUENCE [LARGE SCALE GENOMIC DNA]</scope>
</reference>
<reference key="4">
    <citation type="journal article" date="2004" name="Genome Res.">
        <title>The status, quality, and expansion of the NIH full-length cDNA project: the Mammalian Gene Collection (MGC).</title>
        <authorList>
            <consortium name="The MGC Project Team"/>
        </authorList>
    </citation>
    <scope>NUCLEOTIDE SEQUENCE [LARGE SCALE MRNA] (ISOFORM 1)</scope>
    <scope>VARIANT GLU-456</scope>
    <source>
        <tissue>Testis</tissue>
    </source>
</reference>
<proteinExistence type="evidence at protein level"/>
<dbReference type="EMBL" id="AK097179">
    <property type="protein sequence ID" value="BAC04972.1"/>
    <property type="molecule type" value="mRNA"/>
</dbReference>
<dbReference type="EMBL" id="AK097579">
    <property type="protein sequence ID" value="BAG53488.1"/>
    <property type="molecule type" value="mRNA"/>
</dbReference>
<dbReference type="EMBL" id="AL133077">
    <property type="protein sequence ID" value="CAB61397.2"/>
    <property type="status" value="ALT_SEQ"/>
    <property type="molecule type" value="mRNA"/>
</dbReference>
<dbReference type="EMBL" id="AL589733">
    <property type="status" value="NOT_ANNOTATED_CDS"/>
    <property type="molecule type" value="Genomic_DNA"/>
</dbReference>
<dbReference type="EMBL" id="BC137144">
    <property type="protein sequence ID" value="AAI37145.1"/>
    <property type="molecule type" value="mRNA"/>
</dbReference>
<dbReference type="CCDS" id="CCDS47518.1">
    <molecule id="Q8N878-2"/>
</dbReference>
<dbReference type="CCDS" id="CCDS5306.1">
    <molecule id="Q8N878-1"/>
</dbReference>
<dbReference type="PIR" id="T42674">
    <property type="entry name" value="T42674"/>
</dbReference>
<dbReference type="RefSeq" id="NP_001116313.1">
    <molecule id="Q8N878-2"/>
    <property type="nucleotide sequence ID" value="NM_001122841.3"/>
</dbReference>
<dbReference type="RefSeq" id="NP_079195.3">
    <molecule id="Q8N878-1"/>
    <property type="nucleotide sequence ID" value="NM_024919.4"/>
</dbReference>
<dbReference type="RefSeq" id="XP_011534448.1">
    <property type="nucleotide sequence ID" value="XM_011536146.2"/>
</dbReference>
<dbReference type="RefSeq" id="XP_016866807.1">
    <property type="nucleotide sequence ID" value="XM_017011318.1"/>
</dbReference>
<dbReference type="SMR" id="Q8N878"/>
<dbReference type="BioGRID" id="123046">
    <property type="interactions" value="101"/>
</dbReference>
<dbReference type="FunCoup" id="Q8N878">
    <property type="interactions" value="220"/>
</dbReference>
<dbReference type="IntAct" id="Q8N878">
    <property type="interactions" value="52"/>
</dbReference>
<dbReference type="STRING" id="9606.ENSP00000283309"/>
<dbReference type="iPTMnet" id="Q8N878"/>
<dbReference type="PhosphoSitePlus" id="Q8N878"/>
<dbReference type="BioMuta" id="FRMD1"/>
<dbReference type="DMDM" id="110808243"/>
<dbReference type="MassIVE" id="Q8N878"/>
<dbReference type="PaxDb" id="9606-ENSP00000283309"/>
<dbReference type="PeptideAtlas" id="Q8N878"/>
<dbReference type="ProteomicsDB" id="72378">
    <molecule id="Q8N878-1"/>
</dbReference>
<dbReference type="ProteomicsDB" id="72379">
    <molecule id="Q8N878-2"/>
</dbReference>
<dbReference type="Antibodypedia" id="33557">
    <property type="antibodies" value="58 antibodies from 12 providers"/>
</dbReference>
<dbReference type="DNASU" id="79981"/>
<dbReference type="Ensembl" id="ENST00000283309.11">
    <molecule id="Q8N878-1"/>
    <property type="protein sequence ID" value="ENSP00000283309.6"/>
    <property type="gene ID" value="ENSG00000153303.18"/>
</dbReference>
<dbReference type="Ensembl" id="ENST00000440994.6">
    <molecule id="Q8N878-2"/>
    <property type="protein sequence ID" value="ENSP00000414115.2"/>
    <property type="gene ID" value="ENSG00000153303.18"/>
</dbReference>
<dbReference type="GeneID" id="79981"/>
<dbReference type="KEGG" id="hsa:79981"/>
<dbReference type="MANE-Select" id="ENST00000283309.11">
    <property type="protein sequence ID" value="ENSP00000283309.6"/>
    <property type="RefSeq nucleotide sequence ID" value="NM_024919.6"/>
    <property type="RefSeq protein sequence ID" value="NP_079195.3"/>
</dbReference>
<dbReference type="UCSC" id="uc003qwn.6">
    <molecule id="Q8N878-1"/>
    <property type="organism name" value="human"/>
</dbReference>
<dbReference type="AGR" id="HGNC:21240"/>
<dbReference type="CTD" id="79981"/>
<dbReference type="DisGeNET" id="79981"/>
<dbReference type="GeneCards" id="FRMD1"/>
<dbReference type="HGNC" id="HGNC:21240">
    <property type="gene designation" value="FRMD1"/>
</dbReference>
<dbReference type="HPA" id="ENSG00000153303">
    <property type="expression patterns" value="Tissue enhanced (intestine, kidney, lymphoid tissue, stomach, testis)"/>
</dbReference>
<dbReference type="neXtProt" id="NX_Q8N878"/>
<dbReference type="OpenTargets" id="ENSG00000153303"/>
<dbReference type="PharmGKB" id="PA134993010"/>
<dbReference type="VEuPathDB" id="HostDB:ENSG00000153303"/>
<dbReference type="eggNOG" id="KOG4371">
    <property type="taxonomic scope" value="Eukaryota"/>
</dbReference>
<dbReference type="GeneTree" id="ENSGT00940000162787"/>
<dbReference type="HOGENOM" id="CLU_036910_1_0_1"/>
<dbReference type="InParanoid" id="Q8N878"/>
<dbReference type="OrthoDB" id="5957665at2759"/>
<dbReference type="PAN-GO" id="Q8N878">
    <property type="GO annotations" value="2 GO annotations based on evolutionary models"/>
</dbReference>
<dbReference type="PhylomeDB" id="Q8N878"/>
<dbReference type="TreeFam" id="TF319780"/>
<dbReference type="PathwayCommons" id="Q8N878"/>
<dbReference type="SignaLink" id="Q8N878"/>
<dbReference type="BioGRID-ORCS" id="79981">
    <property type="hits" value="18 hits in 1145 CRISPR screens"/>
</dbReference>
<dbReference type="ChiTaRS" id="FRMD1">
    <property type="organism name" value="human"/>
</dbReference>
<dbReference type="GenomeRNAi" id="79981"/>
<dbReference type="Pharos" id="Q8N878">
    <property type="development level" value="Tdark"/>
</dbReference>
<dbReference type="PRO" id="PR:Q8N878"/>
<dbReference type="Proteomes" id="UP000005640">
    <property type="component" value="Chromosome 6"/>
</dbReference>
<dbReference type="RNAct" id="Q8N878">
    <property type="molecule type" value="protein"/>
</dbReference>
<dbReference type="Bgee" id="ENSG00000153303">
    <property type="expression patterns" value="Expressed in mucosa of transverse colon and 91 other cell types or tissues"/>
</dbReference>
<dbReference type="ExpressionAtlas" id="Q8N878">
    <property type="expression patterns" value="baseline and differential"/>
</dbReference>
<dbReference type="GO" id="GO:0098592">
    <property type="term" value="C:cytoplasmic side of apical plasma membrane"/>
    <property type="evidence" value="ECO:0000318"/>
    <property type="project" value="GO_Central"/>
</dbReference>
<dbReference type="GO" id="GO:0005856">
    <property type="term" value="C:cytoskeleton"/>
    <property type="evidence" value="ECO:0007669"/>
    <property type="project" value="InterPro"/>
</dbReference>
<dbReference type="GO" id="GO:0035332">
    <property type="term" value="P:positive regulation of hippo signaling"/>
    <property type="evidence" value="ECO:0000318"/>
    <property type="project" value="GO_Central"/>
</dbReference>
<dbReference type="CDD" id="cd14473">
    <property type="entry name" value="FERM_B-lobe"/>
    <property type="match status" value="1"/>
</dbReference>
<dbReference type="CDD" id="cd17197">
    <property type="entry name" value="FERM_F1_FRMD1"/>
    <property type="match status" value="1"/>
</dbReference>
<dbReference type="Gene3D" id="1.20.80.10">
    <property type="match status" value="1"/>
</dbReference>
<dbReference type="Gene3D" id="3.10.20.90">
    <property type="entry name" value="Phosphatidylinositol 3-kinase Catalytic Subunit, Chain A, domain 1"/>
    <property type="match status" value="1"/>
</dbReference>
<dbReference type="InterPro" id="IPR019749">
    <property type="entry name" value="Band_41_domain"/>
</dbReference>
<dbReference type="InterPro" id="IPR014352">
    <property type="entry name" value="FERM/acyl-CoA-bd_prot_sf"/>
</dbReference>
<dbReference type="InterPro" id="IPR035963">
    <property type="entry name" value="FERM_2"/>
</dbReference>
<dbReference type="InterPro" id="IPR019748">
    <property type="entry name" value="FERM_central"/>
</dbReference>
<dbReference type="InterPro" id="IPR000299">
    <property type="entry name" value="FERM_domain"/>
</dbReference>
<dbReference type="InterPro" id="IPR018979">
    <property type="entry name" value="FERM_N"/>
</dbReference>
<dbReference type="InterPro" id="IPR018980">
    <property type="entry name" value="FERM_PH-like_C"/>
</dbReference>
<dbReference type="InterPro" id="IPR047145">
    <property type="entry name" value="FRMD6-like"/>
</dbReference>
<dbReference type="InterPro" id="IPR029071">
    <property type="entry name" value="Ubiquitin-like_domsf"/>
</dbReference>
<dbReference type="PANTHER" id="PTHR13429">
    <property type="entry name" value="FERM DOMAIN (PROTEIN4.1-EZRIN-RADIXIN-MOESIN) FAMILY"/>
    <property type="match status" value="1"/>
</dbReference>
<dbReference type="PANTHER" id="PTHR13429:SF7">
    <property type="entry name" value="FERM DOMAIN-CONTAINING PROTEIN 1"/>
    <property type="match status" value="1"/>
</dbReference>
<dbReference type="Pfam" id="PF00373">
    <property type="entry name" value="FERM_M"/>
    <property type="match status" value="1"/>
</dbReference>
<dbReference type="Pfam" id="PF09379">
    <property type="entry name" value="FERM_N"/>
    <property type="match status" value="1"/>
</dbReference>
<dbReference type="SMART" id="SM00295">
    <property type="entry name" value="B41"/>
    <property type="match status" value="1"/>
</dbReference>
<dbReference type="SMART" id="SM01196">
    <property type="entry name" value="FERM_C"/>
    <property type="match status" value="1"/>
</dbReference>
<dbReference type="SUPFAM" id="SSF50729">
    <property type="entry name" value="PH domain-like"/>
    <property type="match status" value="1"/>
</dbReference>
<dbReference type="SUPFAM" id="SSF47031">
    <property type="entry name" value="Second domain of FERM"/>
    <property type="match status" value="1"/>
</dbReference>
<dbReference type="SUPFAM" id="SSF54236">
    <property type="entry name" value="Ubiquitin-like"/>
    <property type="match status" value="1"/>
</dbReference>
<dbReference type="PROSITE" id="PS50057">
    <property type="entry name" value="FERM_3"/>
    <property type="match status" value="1"/>
</dbReference>
<organism>
    <name type="scientific">Homo sapiens</name>
    <name type="common">Human</name>
    <dbReference type="NCBI Taxonomy" id="9606"/>
    <lineage>
        <taxon>Eukaryota</taxon>
        <taxon>Metazoa</taxon>
        <taxon>Chordata</taxon>
        <taxon>Craniata</taxon>
        <taxon>Vertebrata</taxon>
        <taxon>Euteleostomi</taxon>
        <taxon>Mammalia</taxon>
        <taxon>Eutheria</taxon>
        <taxon>Euarchontoglires</taxon>
        <taxon>Primates</taxon>
        <taxon>Haplorrhini</taxon>
        <taxon>Catarrhini</taxon>
        <taxon>Hominidae</taxon>
        <taxon>Homo</taxon>
    </lineage>
</organism>
<sequence length="549" mass="62523">MAVPPRGRGIDPARTNPDTFPPSGARCMEPSPERPACSQQEPTLGMDAMASEHRDVLVLLPSREQLRLAVGVKATGRELFQQVCNVASIRDAQFFGLCVVRNNEYIFMDLEQKLSKYFSKDWKKERNEGNEKPRAPFVAFLRVQHYVENGRVISDHRARHLYYCHLKERVLRSQCAHREEAYFLLAACALQADLGEHRESAHAGRYFEPHSYFPQWIITKRGIDYILRHMPTLHRERQGLSPKEAMLCFIQEACRLEDVPVHFFRLHKDKKEGRPTVILGLALRGVHIYQGKKLEIQLDGLPAAQKLVYYTGCTWRSRHLLHLLRASHQLHLRVRPTLQQLRQREEAEEKQHYRESYISDELELDLASRSFPGSGVSSQHCPHCLSRHSADSHGSSYTSGIKANSWLRESREMSVDVPLEVHGLHEKEPSSSPRTSRSHPSTRGDSQATRQEPCTQVRTRGQSAEAVHQIQEMTAGVSEEQHSHGLDDMQLHQLALHPAPTSLSHTFHRALDCRLAGPCETRATLPSKRSSNCLALDLFGEAPPQEFVV</sequence>
<comment type="interaction">
    <interactant intactId="EBI-11749206">
        <id>Q8N878</id>
    </interactant>
    <interactant intactId="EBI-752037">
        <id>P61019</id>
        <label>RAB2A</label>
    </interactant>
    <organismsDiffer>false</organismsDiffer>
    <experiments>3</experiments>
</comment>
<comment type="alternative products">
    <event type="alternative splicing"/>
    <isoform>
        <id>Q8N878-1</id>
        <name>1</name>
        <sequence type="displayed"/>
    </isoform>
    <isoform>
        <id>Q8N878-2</id>
        <name>2</name>
        <sequence type="described" ref="VSP_041267"/>
    </isoform>
</comment>
<comment type="sequence caution" evidence="6">
    <conflict type="miscellaneous discrepancy">
        <sequence resource="EMBL-CDS" id="CAB61397"/>
    </conflict>
    <text>Intron retention.</text>
</comment>
<keyword id="KW-0025">Alternative splicing</keyword>
<keyword id="KW-1267">Proteomics identification</keyword>
<keyword id="KW-1185">Reference proteome</keyword>
<feature type="chain" id="PRO_0000247364" description="FERM domain-containing protein 1">
    <location>
        <begin position="1"/>
        <end position="549"/>
    </location>
</feature>
<feature type="domain" description="FERM" evidence="1">
    <location>
        <begin position="54"/>
        <end position="369"/>
    </location>
</feature>
<feature type="region of interest" description="Disordered" evidence="2">
    <location>
        <begin position="1"/>
        <end position="40"/>
    </location>
</feature>
<feature type="region of interest" description="Disordered" evidence="2">
    <location>
        <begin position="377"/>
        <end position="400"/>
    </location>
</feature>
<feature type="region of interest" description="Disordered" evidence="2">
    <location>
        <begin position="422"/>
        <end position="464"/>
    </location>
</feature>
<feature type="compositionally biased region" description="Low complexity" evidence="2">
    <location>
        <begin position="430"/>
        <end position="443"/>
    </location>
</feature>
<feature type="compositionally biased region" description="Polar residues" evidence="2">
    <location>
        <begin position="444"/>
        <end position="462"/>
    </location>
</feature>
<feature type="splice variant" id="VSP_041267" description="In isoform 2." evidence="5">
    <original>MAVPPRGRGIDPARTNPDTFPPSGARCMEPSPERPACSQQEPTLGMDAMASEHRDVLVLLPSREQLRLAVG</original>
    <variation>MDD</variation>
    <location>
        <begin position="1"/>
        <end position="71"/>
    </location>
</feature>
<feature type="sequence variant" id="VAR_027099" description="In dbSNP:rs902393.">
    <original>R</original>
    <variation>C</variation>
    <location>
        <position position="274"/>
    </location>
</feature>
<feature type="sequence variant" id="VAR_027100" description="In dbSNP:rs1548349." evidence="3 4">
    <original>Q</original>
    <variation>E</variation>
    <location>
        <position position="456"/>
    </location>
</feature>
<evidence type="ECO:0000255" key="1">
    <source>
        <dbReference type="PROSITE-ProRule" id="PRU00084"/>
    </source>
</evidence>
<evidence type="ECO:0000256" key="2">
    <source>
        <dbReference type="SAM" id="MobiDB-lite"/>
    </source>
</evidence>
<evidence type="ECO:0000269" key="3">
    <source>
    </source>
</evidence>
<evidence type="ECO:0000269" key="4">
    <source>
    </source>
</evidence>
<evidence type="ECO:0000303" key="5">
    <source>
    </source>
</evidence>
<evidence type="ECO:0000305" key="6"/>
<name>FRMD1_HUMAN</name>